<feature type="signal peptide" evidence="1">
    <location>
        <begin position="1"/>
        <end position="18"/>
    </location>
</feature>
<feature type="chain" id="PRO_0000065518" description="Uncharacterized protein ZK512.1">
    <location>
        <begin position="19"/>
        <end position="240"/>
    </location>
</feature>
<feature type="transmembrane region" description="Helical" evidence="1">
    <location>
        <begin position="215"/>
        <end position="235"/>
    </location>
</feature>
<feature type="glycosylation site" description="N-linked (GlcNAc...) asparagine" evidence="2">
    <location>
        <position position="127"/>
    </location>
</feature>
<sequence length="240" mass="27966">MTRYTYLFILQIISCSFAATWVKITKPTITWEDMEVSLEGEKKFFCGEFDSSFTGRYHWRFNGSSILPERTQIHRNQFVFLAGANAIRNQLPGEYECCVRETLGNACYSRMIVVQNRTDNHNIDMTNSTLLLADEGNTYYIRMHDVKRVEGVKCTLDGVNVDNFKYPFLGRQTKKTVPYHLKIENIERGGEVNCDLRLHKKEIVQKTFDIRLLRGFISSSQLPQFVYLIVFTIIGYILRL</sequence>
<name>YOQ1_CAEEL</name>
<proteinExistence type="evidence at protein level"/>
<reference key="1">
    <citation type="journal article" date="1994" name="Nature">
        <title>2.2 Mb of contiguous nucleotide sequence from chromosome III of C. elegans.</title>
        <authorList>
            <person name="Wilson R."/>
            <person name="Ainscough R."/>
            <person name="Anderson K."/>
            <person name="Baynes C."/>
            <person name="Berks M."/>
            <person name="Bonfield J."/>
            <person name="Burton J."/>
            <person name="Connell M."/>
            <person name="Copsey T."/>
            <person name="Cooper J."/>
            <person name="Coulson A."/>
            <person name="Craxton M."/>
            <person name="Dear S."/>
            <person name="Du Z."/>
            <person name="Durbin R."/>
            <person name="Favello A."/>
            <person name="Fraser A."/>
            <person name="Fulton L."/>
            <person name="Gardner A."/>
            <person name="Green P."/>
            <person name="Hawkins T."/>
            <person name="Hillier L."/>
            <person name="Jier M."/>
            <person name="Johnston L."/>
            <person name="Jones M."/>
            <person name="Kershaw J."/>
            <person name="Kirsten J."/>
            <person name="Laisster N."/>
            <person name="Latreille P."/>
            <person name="Lightning J."/>
            <person name="Lloyd C."/>
            <person name="Mortimore B."/>
            <person name="O'Callaghan M."/>
            <person name="Parsons J."/>
            <person name="Percy C."/>
            <person name="Rifken L."/>
            <person name="Roopra A."/>
            <person name="Saunders D."/>
            <person name="Shownkeen R."/>
            <person name="Sims M."/>
            <person name="Smaldon N."/>
            <person name="Smith A."/>
            <person name="Smith M."/>
            <person name="Sonnhammer E."/>
            <person name="Staden R."/>
            <person name="Sulston J."/>
            <person name="Thierry-Mieg J."/>
            <person name="Thomas K."/>
            <person name="Vaudin M."/>
            <person name="Vaughan K."/>
            <person name="Waterston R."/>
            <person name="Watson A."/>
            <person name="Weinstock L."/>
            <person name="Wilkinson-Sproat J."/>
            <person name="Wohldman P."/>
        </authorList>
    </citation>
    <scope>NUCLEOTIDE SEQUENCE [LARGE SCALE GENOMIC DNA]</scope>
    <source>
        <strain>Bristol N2</strain>
    </source>
</reference>
<reference key="2">
    <citation type="journal article" date="1998" name="Science">
        <title>Genome sequence of the nematode C. elegans: a platform for investigating biology.</title>
        <authorList>
            <consortium name="The C. elegans sequencing consortium"/>
        </authorList>
    </citation>
    <scope>NUCLEOTIDE SEQUENCE [LARGE SCALE GENOMIC DNA]</scope>
    <source>
        <strain>Bristol N2</strain>
    </source>
</reference>
<reference key="3">
    <citation type="journal article" date="2007" name="Mol. Cell. Proteomics">
        <title>Proteomics reveals N-linked glycoprotein diversity in Caenorhabditis elegans and suggests an atypical translocation mechanism for integral membrane proteins.</title>
        <authorList>
            <person name="Kaji H."/>
            <person name="Kamiie J."/>
            <person name="Kawakami H."/>
            <person name="Kido K."/>
            <person name="Yamauchi Y."/>
            <person name="Shinkawa T."/>
            <person name="Taoka M."/>
            <person name="Takahashi N."/>
            <person name="Isobe T."/>
        </authorList>
    </citation>
    <scope>GLYCOSYLATION [LARGE SCALE ANALYSIS] AT ASN-127</scope>
    <scope>IDENTIFICATION BY MASS SPECTROMETRY</scope>
    <source>
        <strain>Bristol N2</strain>
    </source>
</reference>
<comment type="subcellular location">
    <subcellularLocation>
        <location evidence="3">Membrane</location>
        <topology evidence="3">Single-pass membrane protein</topology>
    </subcellularLocation>
</comment>
<evidence type="ECO:0000255" key="1"/>
<evidence type="ECO:0000269" key="2">
    <source>
    </source>
</evidence>
<evidence type="ECO:0000305" key="3"/>
<gene>
    <name type="ORF">ZK512.1</name>
</gene>
<organism>
    <name type="scientific">Caenorhabditis elegans</name>
    <dbReference type="NCBI Taxonomy" id="6239"/>
    <lineage>
        <taxon>Eukaryota</taxon>
        <taxon>Metazoa</taxon>
        <taxon>Ecdysozoa</taxon>
        <taxon>Nematoda</taxon>
        <taxon>Chromadorea</taxon>
        <taxon>Rhabditida</taxon>
        <taxon>Rhabditina</taxon>
        <taxon>Rhabditomorpha</taxon>
        <taxon>Rhabditoidea</taxon>
        <taxon>Rhabditidae</taxon>
        <taxon>Peloderinae</taxon>
        <taxon>Caenorhabditis</taxon>
    </lineage>
</organism>
<dbReference type="EMBL" id="Z22177">
    <property type="protein sequence ID" value="CAA80144.2"/>
    <property type="molecule type" value="Genomic_DNA"/>
</dbReference>
<dbReference type="PIR" id="S40762">
    <property type="entry name" value="S40762"/>
</dbReference>
<dbReference type="RefSeq" id="NP_499019.2">
    <property type="nucleotide sequence ID" value="NM_066618.6"/>
</dbReference>
<dbReference type="FunCoup" id="P34639">
    <property type="interactions" value="1177"/>
</dbReference>
<dbReference type="STRING" id="6239.ZK512.1.1"/>
<dbReference type="iPTMnet" id="P34639"/>
<dbReference type="PaxDb" id="6239-ZK512.1"/>
<dbReference type="PeptideAtlas" id="P34639"/>
<dbReference type="EnsemblMetazoa" id="ZK512.1.1">
    <property type="protein sequence ID" value="ZK512.1.1"/>
    <property type="gene ID" value="WBGene00013982"/>
</dbReference>
<dbReference type="GeneID" id="191340"/>
<dbReference type="KEGG" id="cel:CELE_ZK512.1"/>
<dbReference type="UCSC" id="ZK512.1">
    <property type="organism name" value="c. elegans"/>
</dbReference>
<dbReference type="AGR" id="WB:WBGene00013982"/>
<dbReference type="CTD" id="191340"/>
<dbReference type="WormBase" id="ZK512.1">
    <property type="protein sequence ID" value="CE41494"/>
    <property type="gene ID" value="WBGene00013982"/>
</dbReference>
<dbReference type="eggNOG" id="ENOG502TGPR">
    <property type="taxonomic scope" value="Eukaryota"/>
</dbReference>
<dbReference type="HOGENOM" id="CLU_101111_0_0_1"/>
<dbReference type="InParanoid" id="P34639"/>
<dbReference type="OMA" id="ACYSRMI"/>
<dbReference type="OrthoDB" id="5849979at2759"/>
<dbReference type="PRO" id="PR:P34639"/>
<dbReference type="Proteomes" id="UP000001940">
    <property type="component" value="Chromosome III"/>
</dbReference>
<dbReference type="Bgee" id="WBGene00013982">
    <property type="expression patterns" value="Expressed in pharyngeal muscle cell (C elegans) and 3 other cell types or tissues"/>
</dbReference>
<dbReference type="GO" id="GO:0016020">
    <property type="term" value="C:membrane"/>
    <property type="evidence" value="ECO:0007669"/>
    <property type="project" value="UniProtKB-SubCell"/>
</dbReference>
<accession>P34639</accession>
<protein>
    <recommendedName>
        <fullName>Uncharacterized protein ZK512.1</fullName>
    </recommendedName>
</protein>
<keyword id="KW-0325">Glycoprotein</keyword>
<keyword id="KW-0472">Membrane</keyword>
<keyword id="KW-1185">Reference proteome</keyword>
<keyword id="KW-0732">Signal</keyword>
<keyword id="KW-0812">Transmembrane</keyword>
<keyword id="KW-1133">Transmembrane helix</keyword>